<protein>
    <recommendedName>
        <fullName evidence="1">Hydroxymethylglutaryl-CoA synthase</fullName>
        <shortName evidence="1">HMG-CoA synthase</shortName>
        <shortName evidence="1">HMGCS</shortName>
        <ecNumber evidence="1">2.3.3.10</ecNumber>
    </recommendedName>
</protein>
<evidence type="ECO:0000255" key="1">
    <source>
        <dbReference type="HAMAP-Rule" id="MF_01409"/>
    </source>
</evidence>
<dbReference type="EC" id="2.3.3.10" evidence="1"/>
<dbReference type="EMBL" id="CP001403">
    <property type="protein sequence ID" value="ACP45853.1"/>
    <property type="molecule type" value="Genomic_DNA"/>
</dbReference>
<dbReference type="RefSeq" id="WP_012713834.1">
    <property type="nucleotide sequence ID" value="NC_012622.1"/>
</dbReference>
<dbReference type="SMR" id="C3NEW4"/>
<dbReference type="KEGG" id="siy:YG5714_1591"/>
<dbReference type="HOGENOM" id="CLU_039592_7_0_2"/>
<dbReference type="UniPathway" id="UPA00058">
    <property type="reaction ID" value="UER00102"/>
</dbReference>
<dbReference type="Proteomes" id="UP000002308">
    <property type="component" value="Chromosome"/>
</dbReference>
<dbReference type="GO" id="GO:0003985">
    <property type="term" value="F:acetyl-CoA C-acetyltransferase activity"/>
    <property type="evidence" value="ECO:0007669"/>
    <property type="project" value="UniProtKB-UniRule"/>
</dbReference>
<dbReference type="GO" id="GO:0004421">
    <property type="term" value="F:hydroxymethylglutaryl-CoA synthase activity"/>
    <property type="evidence" value="ECO:0007669"/>
    <property type="project" value="InterPro"/>
</dbReference>
<dbReference type="GO" id="GO:0010142">
    <property type="term" value="P:farnesyl diphosphate biosynthetic process, mevalonate pathway"/>
    <property type="evidence" value="ECO:0007669"/>
    <property type="project" value="TreeGrafter"/>
</dbReference>
<dbReference type="GO" id="GO:0019287">
    <property type="term" value="P:isopentenyl diphosphate biosynthetic process, mevalonate pathway"/>
    <property type="evidence" value="ECO:0007669"/>
    <property type="project" value="UniProtKB-UniRule"/>
</dbReference>
<dbReference type="CDD" id="cd00827">
    <property type="entry name" value="init_cond_enzymes"/>
    <property type="match status" value="1"/>
</dbReference>
<dbReference type="FunFam" id="3.40.47.10:FF:000046">
    <property type="entry name" value="UPF0219 protein M1627_1703"/>
    <property type="match status" value="1"/>
</dbReference>
<dbReference type="Gene3D" id="3.40.47.10">
    <property type="match status" value="1"/>
</dbReference>
<dbReference type="HAMAP" id="MF_01409">
    <property type="entry name" value="HMG_CoA_synth_arch"/>
    <property type="match status" value="1"/>
</dbReference>
<dbReference type="InterPro" id="IPR013747">
    <property type="entry name" value="ACP_syn_III_C"/>
</dbReference>
<dbReference type="InterPro" id="IPR004656">
    <property type="entry name" value="HMG_CoA_Synthase"/>
</dbReference>
<dbReference type="InterPro" id="IPR016039">
    <property type="entry name" value="Thiolase-like"/>
</dbReference>
<dbReference type="NCBIfam" id="TIGR00748">
    <property type="entry name" value="HMG_CoA_syn_Arc"/>
    <property type="match status" value="1"/>
</dbReference>
<dbReference type="NCBIfam" id="NF003274">
    <property type="entry name" value="PRK04262.1"/>
    <property type="match status" value="1"/>
</dbReference>
<dbReference type="PANTHER" id="PTHR43323">
    <property type="entry name" value="3-HYDROXY-3-METHYLGLUTARYL COENZYME A SYNTHASE"/>
    <property type="match status" value="1"/>
</dbReference>
<dbReference type="PANTHER" id="PTHR43323:SF2">
    <property type="entry name" value="HYDROXYMETHYLGLUTARYL-COA SYNTHASE"/>
    <property type="match status" value="1"/>
</dbReference>
<dbReference type="Pfam" id="PF08541">
    <property type="entry name" value="ACP_syn_III_C"/>
    <property type="match status" value="1"/>
</dbReference>
<dbReference type="SUPFAM" id="SSF53901">
    <property type="entry name" value="Thiolase-like"/>
    <property type="match status" value="2"/>
</dbReference>
<name>HMGCS_SACI7</name>
<accession>C3NEW4</accession>
<sequence>MLSGILGWGAYVPRYRIKVEDIAKMWGYDEGVVRSLGLTEKSVPGHDEDSTTIAWESSINAIKRAQVDPSKIRLVLFGSESKVYAVKPTSTILIDALGINNYSATADMEFACRAASVGLRLASSFVLHNSDSYALVIGADTAQSNPGDVLELSSAAAGVAFVVGNVDEKHSAAVIEYSSSYTSDTPDFWRRDGTPYPVHGEGFTGEPAYFHHIISAVSDLLQNSGLKISDFDYFVFHQPNGKFPIQVAKKLGVQLEKVKQGLVSPYIGNPYNASALLGLAKVLDIAKPGERILVAPFGSGAGSDAFSILVSEGILEKQKLAKTVEYYINNKKLVSYAEYAKYTNKIKVYE</sequence>
<organism>
    <name type="scientific">Saccharolobus islandicus (strain Y.G.57.14 / Yellowstone #1)</name>
    <name type="common">Sulfolobus islandicus</name>
    <dbReference type="NCBI Taxonomy" id="439386"/>
    <lineage>
        <taxon>Archaea</taxon>
        <taxon>Thermoproteota</taxon>
        <taxon>Thermoprotei</taxon>
        <taxon>Sulfolobales</taxon>
        <taxon>Sulfolobaceae</taxon>
        <taxon>Saccharolobus</taxon>
    </lineage>
</organism>
<keyword id="KW-0012">Acyltransferase</keyword>
<keyword id="KW-0414">Isoprene biosynthesis</keyword>
<keyword id="KW-0808">Transferase</keyword>
<reference key="1">
    <citation type="journal article" date="2009" name="Proc. Natl. Acad. Sci. U.S.A.">
        <title>Biogeography of the Sulfolobus islandicus pan-genome.</title>
        <authorList>
            <person name="Reno M.L."/>
            <person name="Held N.L."/>
            <person name="Fields C.J."/>
            <person name="Burke P.V."/>
            <person name="Whitaker R.J."/>
        </authorList>
    </citation>
    <scope>NUCLEOTIDE SEQUENCE [LARGE SCALE GENOMIC DNA]</scope>
    <source>
        <strain>Y.G.57.14 / Yellowstone #1</strain>
    </source>
</reference>
<feature type="chain" id="PRO_1000215218" description="Hydroxymethylglutaryl-CoA synthase">
    <location>
        <begin position="1"/>
        <end position="350"/>
    </location>
</feature>
<feature type="active site" description="Proton donor/acceptor" evidence="1">
    <location>
        <position position="80"/>
    </location>
</feature>
<feature type="active site" description="Acyl-thioester intermediate" evidence="1">
    <location>
        <position position="112"/>
    </location>
</feature>
<feature type="active site" description="Proton donor/acceptor" evidence="1">
    <location>
        <position position="237"/>
    </location>
</feature>
<feature type="binding site" evidence="1">
    <location>
        <position position="29"/>
    </location>
    <ligand>
        <name>(3S)-3-hydroxy-3-methylglutaryl-CoA</name>
        <dbReference type="ChEBI" id="CHEBI:43074"/>
    </ligand>
</feature>
<feature type="binding site" evidence="1">
    <location>
        <position position="112"/>
    </location>
    <ligand>
        <name>(3S)-3-hydroxy-3-methylglutaryl-CoA</name>
        <dbReference type="ChEBI" id="CHEBI:43074"/>
    </ligand>
</feature>
<feature type="binding site" evidence="1">
    <location>
        <position position="153"/>
    </location>
    <ligand>
        <name>(3S)-3-hydroxy-3-methylglutaryl-CoA</name>
        <dbReference type="ChEBI" id="CHEBI:43074"/>
    </ligand>
</feature>
<feature type="binding site" evidence="1">
    <location>
        <position position="204"/>
    </location>
    <ligand>
        <name>(3S)-3-hydroxy-3-methylglutaryl-CoA</name>
        <dbReference type="ChEBI" id="CHEBI:43074"/>
    </ligand>
</feature>
<feature type="binding site" evidence="1">
    <location>
        <position position="237"/>
    </location>
    <ligand>
        <name>(3S)-3-hydroxy-3-methylglutaryl-CoA</name>
        <dbReference type="ChEBI" id="CHEBI:43074"/>
    </ligand>
</feature>
<feature type="binding site" evidence="1">
    <location>
        <position position="242"/>
    </location>
    <ligand>
        <name>CoA</name>
        <dbReference type="ChEBI" id="CHEBI:57287"/>
        <note>ligand shared with acetoacetyl-CoA thiolase</note>
    </ligand>
</feature>
<feature type="binding site" evidence="1">
    <location>
        <position position="269"/>
    </location>
    <ligand>
        <name>(3S)-3-hydroxy-3-methylglutaryl-CoA</name>
        <dbReference type="ChEBI" id="CHEBI:43074"/>
    </ligand>
</feature>
<feature type="binding site" evidence="1">
    <location>
        <position position="299"/>
    </location>
    <ligand>
        <name>(3S)-3-hydroxy-3-methylglutaryl-CoA</name>
        <dbReference type="ChEBI" id="CHEBI:43074"/>
    </ligand>
</feature>
<gene>
    <name type="ordered locus">YG5714_1591</name>
</gene>
<comment type="function">
    <text evidence="1">Catalyzes the condensation of acetyl-CoA with acetoacetyl-CoA to form 3-hydroxy-3-methylglutaryl-CoA (HMG-CoA). Functions in the mevalonate (MVA) pathway leading to isopentenyl diphosphate (IPP), a key precursor for the biosynthesis of isoprenoid compounds that are building blocks of archaeal membrane lipids.</text>
</comment>
<comment type="catalytic activity">
    <reaction evidence="1">
        <text>acetoacetyl-CoA + acetyl-CoA + H2O = (3S)-3-hydroxy-3-methylglutaryl-CoA + CoA + H(+)</text>
        <dbReference type="Rhea" id="RHEA:10188"/>
        <dbReference type="ChEBI" id="CHEBI:15377"/>
        <dbReference type="ChEBI" id="CHEBI:15378"/>
        <dbReference type="ChEBI" id="CHEBI:43074"/>
        <dbReference type="ChEBI" id="CHEBI:57286"/>
        <dbReference type="ChEBI" id="CHEBI:57287"/>
        <dbReference type="ChEBI" id="CHEBI:57288"/>
        <dbReference type="EC" id="2.3.3.10"/>
    </reaction>
    <physiologicalReaction direction="left-to-right" evidence="1">
        <dbReference type="Rhea" id="RHEA:10189"/>
    </physiologicalReaction>
</comment>
<comment type="pathway">
    <text evidence="1">Metabolic intermediate biosynthesis; (R)-mevalonate biosynthesis; (R)-mevalonate from acetyl-CoA: step 2/3.</text>
</comment>
<comment type="subunit">
    <text evidence="1">Interacts with acetoacetyl-CoA thiolase that catalyzes the precedent step in the pathway and with a DUF35 protein. The acetoacetyl-CoA thiolase/HMG-CoA synthase complex channels the intermediate via a fused CoA-binding site, which allows for efficient coupling of the endergonic thiolase reaction with the exergonic HMGCS reaction.</text>
</comment>
<comment type="similarity">
    <text evidence="1">Belongs to the thiolase-like superfamily. Archaeal HMG-CoA synthase family.</text>
</comment>
<proteinExistence type="inferred from homology"/>